<feature type="transit peptide" description="Mitochondrion" evidence="2">
    <location>
        <begin position="1"/>
        <end status="unknown"/>
    </location>
</feature>
<feature type="chain" id="PRO_0000353183" description="3-hydroxyisobutyryl-CoA hydrolase, mitochondrial">
    <location>
        <begin status="unknown"/>
        <end position="385"/>
    </location>
</feature>
<feature type="binding site" evidence="1">
    <location>
        <position position="120"/>
    </location>
    <ligand>
        <name>substrate</name>
    </ligand>
</feature>
<feature type="binding site" evidence="1">
    <location>
        <position position="145"/>
    </location>
    <ligand>
        <name>substrate</name>
    </ligand>
</feature>
<feature type="binding site" evidence="1">
    <location>
        <position position="168"/>
    </location>
    <ligand>
        <name>substrate</name>
    </ligand>
</feature>
<feature type="binding site" evidence="1">
    <location>
        <position position="176"/>
    </location>
    <ligand>
        <name>substrate</name>
    </ligand>
</feature>
<name>HIBCH_XENLA</name>
<reference key="1">
    <citation type="submission" date="2006-12" db="EMBL/GenBank/DDBJ databases">
        <authorList>
            <consortium name="NIH - Xenopus Gene Collection (XGC) project"/>
        </authorList>
    </citation>
    <scope>NUCLEOTIDE SEQUENCE [LARGE SCALE MRNA]</scope>
    <source>
        <tissue>Thymus</tissue>
    </source>
</reference>
<dbReference type="EC" id="3.1.2.4"/>
<dbReference type="EMBL" id="BC129743">
    <property type="protein sequence ID" value="AAI29744.1"/>
    <property type="molecule type" value="mRNA"/>
</dbReference>
<dbReference type="RefSeq" id="NP_001091374.1">
    <property type="nucleotide sequence ID" value="NM_001097905.1"/>
</dbReference>
<dbReference type="SMR" id="A2VDC2"/>
<dbReference type="BioGRID" id="674494">
    <property type="interactions" value="2"/>
</dbReference>
<dbReference type="GeneID" id="100037216"/>
<dbReference type="KEGG" id="xla:100037216"/>
<dbReference type="AGR" id="Xenbase:XB-GENE-947701"/>
<dbReference type="CTD" id="100037216"/>
<dbReference type="Xenbase" id="XB-GENE-947701">
    <property type="gene designation" value="hibch.L"/>
</dbReference>
<dbReference type="OrthoDB" id="1737613at2759"/>
<dbReference type="UniPathway" id="UPA00362"/>
<dbReference type="Proteomes" id="UP000186698">
    <property type="component" value="Chromosome 9_10L"/>
</dbReference>
<dbReference type="Bgee" id="100037216">
    <property type="expression patterns" value="Expressed in heart and 19 other cell types or tissues"/>
</dbReference>
<dbReference type="GO" id="GO:0005739">
    <property type="term" value="C:mitochondrion"/>
    <property type="evidence" value="ECO:0000318"/>
    <property type="project" value="GO_Central"/>
</dbReference>
<dbReference type="GO" id="GO:0003860">
    <property type="term" value="F:3-hydroxyisobutyryl-CoA hydrolase activity"/>
    <property type="evidence" value="ECO:0000318"/>
    <property type="project" value="GO_Central"/>
</dbReference>
<dbReference type="GO" id="GO:0006574">
    <property type="term" value="P:valine catabolic process"/>
    <property type="evidence" value="ECO:0000318"/>
    <property type="project" value="GO_Central"/>
</dbReference>
<dbReference type="CDD" id="cd06558">
    <property type="entry name" value="crotonase-like"/>
    <property type="match status" value="1"/>
</dbReference>
<dbReference type="FunFam" id="3.90.226.10:FF:000026">
    <property type="entry name" value="3-hydroxyisobutyryl-CoA hydrolase, mitochondrial"/>
    <property type="match status" value="1"/>
</dbReference>
<dbReference type="Gene3D" id="3.90.226.10">
    <property type="entry name" value="2-enoyl-CoA Hydratase, Chain A, domain 1"/>
    <property type="match status" value="1"/>
</dbReference>
<dbReference type="InterPro" id="IPR029045">
    <property type="entry name" value="ClpP/crotonase-like_dom_sf"/>
</dbReference>
<dbReference type="InterPro" id="IPR045004">
    <property type="entry name" value="ECH_dom"/>
</dbReference>
<dbReference type="InterPro" id="IPR032259">
    <property type="entry name" value="HIBYL-CoA-H"/>
</dbReference>
<dbReference type="NCBIfam" id="NF004127">
    <property type="entry name" value="PRK05617.1"/>
    <property type="match status" value="1"/>
</dbReference>
<dbReference type="PANTHER" id="PTHR43176:SF3">
    <property type="entry name" value="3-HYDROXYISOBUTYRYL-COA HYDROLASE, MITOCHONDRIAL"/>
    <property type="match status" value="1"/>
</dbReference>
<dbReference type="PANTHER" id="PTHR43176">
    <property type="entry name" value="3-HYDROXYISOBUTYRYL-COA HYDROLASE-RELATED"/>
    <property type="match status" value="1"/>
</dbReference>
<dbReference type="Pfam" id="PF16113">
    <property type="entry name" value="ECH_2"/>
    <property type="match status" value="1"/>
</dbReference>
<dbReference type="SUPFAM" id="SSF52096">
    <property type="entry name" value="ClpP/crotonase"/>
    <property type="match status" value="1"/>
</dbReference>
<organism>
    <name type="scientific">Xenopus laevis</name>
    <name type="common">African clawed frog</name>
    <dbReference type="NCBI Taxonomy" id="8355"/>
    <lineage>
        <taxon>Eukaryota</taxon>
        <taxon>Metazoa</taxon>
        <taxon>Chordata</taxon>
        <taxon>Craniata</taxon>
        <taxon>Vertebrata</taxon>
        <taxon>Euteleostomi</taxon>
        <taxon>Amphibia</taxon>
        <taxon>Batrachia</taxon>
        <taxon>Anura</taxon>
        <taxon>Pipoidea</taxon>
        <taxon>Pipidae</taxon>
        <taxon>Xenopodinae</taxon>
        <taxon>Xenopus</taxon>
        <taxon>Xenopus</taxon>
    </lineage>
</organism>
<evidence type="ECO:0000250" key="1"/>
<evidence type="ECO:0000255" key="2"/>
<evidence type="ECO:0000305" key="3"/>
<sequence length="385" mass="42367">MSFGRLESQLRLKVFGRLQVIRQHLRMSNHTVKDGGCLLTKAGCAGVITLNRPKALNALNLGMIRQIYPQLKLWEEDPETYLVIIKGAGGKAFCAGGDIRAVTDAGKVGDRLAQDFFREEYILNNAIGTCKKPYVAVIDGITMGGGVGLSVHGHFRVASEKTLFAMPETAIGLFPDVGGGYFLPRLTGKLGLYLALTGFRLKGSDVQKAGIATHFVESEKLSSLEQDLVAMKSPSKENVADVLDSYQKKSYAAQDKPFVLAENMDKINSLFSGNTVEEIMENLKCDGSSFAMKQLQTLSTMSPTSLKITFRQLKEGASMSLQEVLTMEYRLSQACMNGHDFYEGVRAVLIDKDQKAKWKPESLEEVTEDYIDSCFTSLGSRDLKL</sequence>
<comment type="function">
    <text evidence="1">Hydrolyzes 3-hydroxyisobutyryl-CoA (HIBYL-CoA), a saline catabolite. Has high activity toward isobutyryl-CoA. Could be an isobutyryl-CoA dehydrogenase that functions in valine catabolism. Also hydrolyzes 3-hydroxypropanoyl-CoA (By similarity).</text>
</comment>
<comment type="catalytic activity">
    <reaction>
        <text>3-hydroxy-2-methylpropanoyl-CoA + H2O = 3-hydroxy-2-methylpropanoate + CoA + H(+)</text>
        <dbReference type="Rhea" id="RHEA:20888"/>
        <dbReference type="ChEBI" id="CHEBI:11805"/>
        <dbReference type="ChEBI" id="CHEBI:15377"/>
        <dbReference type="ChEBI" id="CHEBI:15378"/>
        <dbReference type="ChEBI" id="CHEBI:57287"/>
        <dbReference type="ChEBI" id="CHEBI:57340"/>
        <dbReference type="EC" id="3.1.2.4"/>
    </reaction>
</comment>
<comment type="pathway">
    <text>Amino-acid degradation; L-valine degradation.</text>
</comment>
<comment type="subcellular location">
    <subcellularLocation>
        <location evidence="1">Mitochondrion</location>
    </subcellularLocation>
</comment>
<comment type="similarity">
    <text evidence="3">Belongs to the enoyl-CoA hydratase/isomerase family.</text>
</comment>
<keyword id="KW-0101">Branched-chain amino acid catabolism</keyword>
<keyword id="KW-0378">Hydrolase</keyword>
<keyword id="KW-0496">Mitochondrion</keyword>
<keyword id="KW-1185">Reference proteome</keyword>
<keyword id="KW-0809">Transit peptide</keyword>
<gene>
    <name type="primary">hibch</name>
</gene>
<accession>A2VDC2</accession>
<proteinExistence type="evidence at transcript level"/>
<protein>
    <recommendedName>
        <fullName>3-hydroxyisobutyryl-CoA hydrolase, mitochondrial</fullName>
        <ecNumber>3.1.2.4</ecNumber>
    </recommendedName>
    <alternativeName>
        <fullName>3-hydroxyisobutyryl-coenzyme A hydrolase</fullName>
        <shortName>HIB-CoA hydrolase</shortName>
        <shortName>HIBYL-CoA-H</shortName>
    </alternativeName>
</protein>